<geneLocation type="chloroplast"/>
<name>NU2C1_SPIOL</name>
<keyword id="KW-0002">3D-structure</keyword>
<keyword id="KW-0150">Chloroplast</keyword>
<keyword id="KW-0472">Membrane</keyword>
<keyword id="KW-0520">NAD</keyword>
<keyword id="KW-0521">NADP</keyword>
<keyword id="KW-0934">Plastid</keyword>
<keyword id="KW-0618">Plastoquinone</keyword>
<keyword id="KW-0874">Quinone</keyword>
<keyword id="KW-1185">Reference proteome</keyword>
<keyword id="KW-0793">Thylakoid</keyword>
<keyword id="KW-1278">Translocase</keyword>
<keyword id="KW-0812">Transmembrane</keyword>
<keyword id="KW-1133">Transmembrane helix</keyword>
<keyword id="KW-0813">Transport</keyword>
<feature type="chain" id="PRO_0000117679" description="NAD(P)H-quinone oxidoreductase subunit 2 A, chloroplastic">
    <location>
        <begin position="1"/>
        <end position="510"/>
    </location>
</feature>
<feature type="transmembrane region" description="Helical" evidence="1">
    <location>
        <begin position="24"/>
        <end position="44"/>
    </location>
</feature>
<feature type="transmembrane region" description="Helical" evidence="1">
    <location>
        <begin position="57"/>
        <end position="77"/>
    </location>
</feature>
<feature type="transmembrane region" description="Helical" evidence="1">
    <location>
        <begin position="99"/>
        <end position="119"/>
    </location>
</feature>
<feature type="transmembrane region" description="Helical" evidence="1">
    <location>
        <begin position="124"/>
        <end position="144"/>
    </location>
</feature>
<feature type="transmembrane region" description="Helical" evidence="1">
    <location>
        <begin position="149"/>
        <end position="169"/>
    </location>
</feature>
<feature type="transmembrane region" description="Helical" evidence="1">
    <location>
        <begin position="183"/>
        <end position="203"/>
    </location>
</feature>
<feature type="transmembrane region" description="Helical" evidence="1">
    <location>
        <begin position="227"/>
        <end position="247"/>
    </location>
</feature>
<feature type="transmembrane region" description="Helical" evidence="1">
    <location>
        <begin position="295"/>
        <end position="315"/>
    </location>
</feature>
<feature type="transmembrane region" description="Helical" evidence="1">
    <location>
        <begin position="323"/>
        <end position="343"/>
    </location>
</feature>
<feature type="transmembrane region" description="Helical" evidence="1">
    <location>
        <begin position="354"/>
        <end position="374"/>
    </location>
</feature>
<feature type="transmembrane region" description="Helical" evidence="1">
    <location>
        <begin position="395"/>
        <end position="415"/>
    </location>
</feature>
<feature type="transmembrane region" description="Helical" evidence="1">
    <location>
        <begin position="418"/>
        <end position="438"/>
    </location>
</feature>
<feature type="transmembrane region" description="Helical" evidence="1">
    <location>
        <begin position="484"/>
        <end position="504"/>
    </location>
</feature>
<gene>
    <name evidence="1" type="primary">ndhB1</name>
</gene>
<proteinExistence type="evidence at protein level"/>
<dbReference type="EC" id="7.1.1.-" evidence="1"/>
<dbReference type="EMBL" id="AJ400848">
    <property type="protein sequence ID" value="CAB88772.1"/>
    <property type="molecule type" value="Genomic_DNA"/>
</dbReference>
<dbReference type="EMBL" id="X13156">
    <property type="protein sequence ID" value="CAA31553.1"/>
    <property type="molecule type" value="Genomic_DNA"/>
</dbReference>
<dbReference type="PIR" id="S24634">
    <property type="entry name" value="S24634"/>
</dbReference>
<dbReference type="PDB" id="9GRX">
    <property type="method" value="EM"/>
    <property type="resolution" value="3.19 A"/>
    <property type="chains" value="B=20-507"/>
</dbReference>
<dbReference type="PDBsum" id="9GRX"/>
<dbReference type="EMDB" id="EMD-51527"/>
<dbReference type="SMR" id="P0CD52"/>
<dbReference type="FunCoup" id="P0CD52">
    <property type="interactions" value="13"/>
</dbReference>
<dbReference type="STRING" id="3562.P0CD52"/>
<dbReference type="KEGG" id="soe:2715585"/>
<dbReference type="KEGG" id="soe:2715586"/>
<dbReference type="InParanoid" id="P0CD52"/>
<dbReference type="OrthoDB" id="1876953at2759"/>
<dbReference type="Proteomes" id="UP001155700">
    <property type="component" value="Unplaced"/>
</dbReference>
<dbReference type="GO" id="GO:0009535">
    <property type="term" value="C:chloroplast thylakoid membrane"/>
    <property type="evidence" value="ECO:0007669"/>
    <property type="project" value="UniProtKB-SubCell"/>
</dbReference>
<dbReference type="GO" id="GO:0008137">
    <property type="term" value="F:NADH dehydrogenase (ubiquinone) activity"/>
    <property type="evidence" value="ECO:0007669"/>
    <property type="project" value="InterPro"/>
</dbReference>
<dbReference type="GO" id="GO:0048038">
    <property type="term" value="F:quinone binding"/>
    <property type="evidence" value="ECO:0007669"/>
    <property type="project" value="UniProtKB-KW"/>
</dbReference>
<dbReference type="GO" id="GO:0042773">
    <property type="term" value="P:ATP synthesis coupled electron transport"/>
    <property type="evidence" value="ECO:0007669"/>
    <property type="project" value="InterPro"/>
</dbReference>
<dbReference type="GO" id="GO:0019684">
    <property type="term" value="P:photosynthesis, light reaction"/>
    <property type="evidence" value="ECO:0007669"/>
    <property type="project" value="UniProtKB-UniRule"/>
</dbReference>
<dbReference type="HAMAP" id="MF_00445">
    <property type="entry name" value="NDH1_NuoN_1"/>
    <property type="match status" value="1"/>
</dbReference>
<dbReference type="InterPro" id="IPR010096">
    <property type="entry name" value="NADH-Q_OxRdtase_suN/2"/>
</dbReference>
<dbReference type="InterPro" id="IPR001750">
    <property type="entry name" value="ND/Mrp_TM"/>
</dbReference>
<dbReference type="InterPro" id="IPR045693">
    <property type="entry name" value="Ndh2_N"/>
</dbReference>
<dbReference type="NCBIfam" id="TIGR01770">
    <property type="entry name" value="NDH_I_N"/>
    <property type="match status" value="1"/>
</dbReference>
<dbReference type="NCBIfam" id="NF002701">
    <property type="entry name" value="PRK02504.1"/>
    <property type="match status" value="1"/>
</dbReference>
<dbReference type="PANTHER" id="PTHR22773">
    <property type="entry name" value="NADH DEHYDROGENASE"/>
    <property type="match status" value="1"/>
</dbReference>
<dbReference type="Pfam" id="PF19530">
    <property type="entry name" value="Ndh2_N"/>
    <property type="match status" value="1"/>
</dbReference>
<dbReference type="Pfam" id="PF00361">
    <property type="entry name" value="Proton_antipo_M"/>
    <property type="match status" value="1"/>
</dbReference>
<dbReference type="PRINTS" id="PR01434">
    <property type="entry name" value="NADHDHGNASE5"/>
</dbReference>
<comment type="function">
    <text evidence="1">NDH shuttles electrons from NAD(P)H:plastoquinone, via FMN and iron-sulfur (Fe-S) centers, to quinones in the photosynthetic chain and possibly in a chloroplast respiratory chain. The immediate electron acceptor for the enzyme in this species is believed to be plastoquinone. Couples the redox reaction to proton translocation, and thus conserves the redox energy in a proton gradient.</text>
</comment>
<comment type="catalytic activity">
    <reaction evidence="1">
        <text>a plastoquinone + NADH + (n+1) H(+)(in) = a plastoquinol + NAD(+) + n H(+)(out)</text>
        <dbReference type="Rhea" id="RHEA:42608"/>
        <dbReference type="Rhea" id="RHEA-COMP:9561"/>
        <dbReference type="Rhea" id="RHEA-COMP:9562"/>
        <dbReference type="ChEBI" id="CHEBI:15378"/>
        <dbReference type="ChEBI" id="CHEBI:17757"/>
        <dbReference type="ChEBI" id="CHEBI:57540"/>
        <dbReference type="ChEBI" id="CHEBI:57945"/>
        <dbReference type="ChEBI" id="CHEBI:62192"/>
    </reaction>
</comment>
<comment type="catalytic activity">
    <reaction evidence="1">
        <text>a plastoquinone + NADPH + (n+1) H(+)(in) = a plastoquinol + NADP(+) + n H(+)(out)</text>
        <dbReference type="Rhea" id="RHEA:42612"/>
        <dbReference type="Rhea" id="RHEA-COMP:9561"/>
        <dbReference type="Rhea" id="RHEA-COMP:9562"/>
        <dbReference type="ChEBI" id="CHEBI:15378"/>
        <dbReference type="ChEBI" id="CHEBI:17757"/>
        <dbReference type="ChEBI" id="CHEBI:57783"/>
        <dbReference type="ChEBI" id="CHEBI:58349"/>
        <dbReference type="ChEBI" id="CHEBI:62192"/>
    </reaction>
</comment>
<comment type="subunit">
    <text evidence="1">NDH is composed of at least 16 different subunits, 5 of which are encoded in the nucleus.</text>
</comment>
<comment type="subcellular location">
    <subcellularLocation>
        <location evidence="1">Plastid</location>
        <location evidence="1">Chloroplast thylakoid membrane</location>
        <topology evidence="1">Multi-pass membrane protein</topology>
    </subcellularLocation>
</comment>
<comment type="similarity">
    <text evidence="1">Belongs to the complex I subunit 2 family.</text>
</comment>
<sequence length="510" mass="56735">MIWHVQNENFILDSTRIFMKAFHLLLFDGSLIFPECILIFGLILLLMIDSTSDQKDIPWLYFISSTSLVMSITALLFRWREEPMISFSGNFQTNNFNEIFQFLILLCSTLCIPLSVEYIECTEMALTEFLLFILTATLGGMFLCGANDLITIFVAPECFSLCSYLLSGYTKKDVRSNEATTKYLLMGGASSSILVHGFSWLYGSSGGEIELQEIVNGLINTQMYNSPGISIALIFITVGIGFKLSPAPSHQWTPDVYEGSPTPVVAFLSVTSKVAASASATRIFDIPFYFSSNEWHLLLEILAILSMILGNLIAITQTSMKRMLAYSSIGQIGYVIIGIIVGDSNDGYASMITYMLFYISMNLGTFACIVLFGLRTGTDNIRDYAGLYTKDPFLALSLALCLLSLGGLPPLAGFFGKIYLFWCGWQAGLYFLVLIGLLTSVLSIYYYLKIIKLLMTGRNQEITPHVRNYRRSPLRSKNSIEFSMIVCVIASTIPGISMNPIITIAQDTLF</sequence>
<organism>
    <name type="scientific">Spinacia oleracea</name>
    <name type="common">Spinach</name>
    <dbReference type="NCBI Taxonomy" id="3562"/>
    <lineage>
        <taxon>Eukaryota</taxon>
        <taxon>Viridiplantae</taxon>
        <taxon>Streptophyta</taxon>
        <taxon>Embryophyta</taxon>
        <taxon>Tracheophyta</taxon>
        <taxon>Spermatophyta</taxon>
        <taxon>Magnoliopsida</taxon>
        <taxon>eudicotyledons</taxon>
        <taxon>Gunneridae</taxon>
        <taxon>Pentapetalae</taxon>
        <taxon>Caryophyllales</taxon>
        <taxon>Chenopodiaceae</taxon>
        <taxon>Chenopodioideae</taxon>
        <taxon>Anserineae</taxon>
        <taxon>Spinacia</taxon>
    </lineage>
</organism>
<reference key="1">
    <citation type="journal article" date="2001" name="Plant Mol. Biol.">
        <title>The plastid chromosome of spinach (Spinacia oleracea): complete nucleotide sequence and gene organization.</title>
        <authorList>
            <person name="Schmitz-Linneweber C."/>
            <person name="Maier R.M."/>
            <person name="Alcaraz J.-P."/>
            <person name="Cottet A."/>
            <person name="Herrmann R.G."/>
            <person name="Mache R."/>
        </authorList>
    </citation>
    <scope>NUCLEOTIDE SEQUENCE [LARGE SCALE GENOMIC DNA]</scope>
    <source>
        <strain>cv. Geant d'hiver</strain>
        <strain>cv. Monatol</strain>
    </source>
</reference>
<reference key="2">
    <citation type="submission" date="1988-10" db="EMBL/GenBank/DDBJ databases">
        <title>Nucleotide sequence of the SalI SmaI fragment of spinach chloroplast DNA containing the 3' exon of the ndhB gene.</title>
        <authorList>
            <person name="Zhou D.X."/>
            <person name="Quigley F."/>
            <person name="Mache R."/>
        </authorList>
    </citation>
    <scope>NUCLEOTIDE SEQUENCE [GENOMIC DNA] OF 260-510</scope>
    <source>
        <tissue>Leaf</tissue>
    </source>
</reference>
<accession>P0CD52</accession>
<accession>Q36793</accession>
<accession>Q9LD71</accession>
<protein>
    <recommendedName>
        <fullName evidence="1">NAD(P)H-quinone oxidoreductase subunit 2 A, chloroplastic</fullName>
        <ecNumber evidence="1">7.1.1.-</ecNumber>
    </recommendedName>
    <alternativeName>
        <fullName evidence="1">NAD(P)H dehydrogenase, subunit 2 A</fullName>
    </alternativeName>
    <alternativeName>
        <fullName evidence="1">NADH-plastoquinone oxidoreductase subunit 2 A</fullName>
    </alternativeName>
</protein>
<evidence type="ECO:0000255" key="1">
    <source>
        <dbReference type="HAMAP-Rule" id="MF_00445"/>
    </source>
</evidence>